<name>DFB30_RAT</name>
<dbReference type="EMBL" id="AY621361">
    <property type="protein sequence ID" value="AAT51900.1"/>
    <property type="molecule type" value="mRNA"/>
</dbReference>
<dbReference type="EMBL" id="AY600146">
    <property type="protein sequence ID" value="AAU04550.1"/>
    <property type="molecule type" value="mRNA"/>
</dbReference>
<dbReference type="RefSeq" id="NP_001032620.1">
    <property type="nucleotide sequence ID" value="NM_001037531.2"/>
</dbReference>
<dbReference type="RefSeq" id="NP_001399513.1">
    <property type="nucleotide sequence ID" value="NM_001412584.1"/>
</dbReference>
<dbReference type="RefSeq" id="XP_008768998.1">
    <property type="nucleotide sequence ID" value="XM_008770776.1"/>
</dbReference>
<dbReference type="SMR" id="Q32ZG2"/>
<dbReference type="FunCoup" id="Q32ZG2">
    <property type="interactions" value="14"/>
</dbReference>
<dbReference type="STRING" id="10116.ENSRNOP00000055981"/>
<dbReference type="PaxDb" id="10116-ENSRNOP00000055981"/>
<dbReference type="Ensembl" id="ENSRNOT00000059211.4">
    <property type="protein sequence ID" value="ENSRNOP00000055981.2"/>
    <property type="gene ID" value="ENSRNOG00000038758.4"/>
</dbReference>
<dbReference type="GeneID" id="641656"/>
<dbReference type="KEGG" id="rno:641656"/>
<dbReference type="UCSC" id="RGD:1559641">
    <property type="organism name" value="rat"/>
</dbReference>
<dbReference type="AGR" id="RGD:1559641"/>
<dbReference type="CTD" id="73670"/>
<dbReference type="RGD" id="1559641">
    <property type="gene designation" value="Defb30"/>
</dbReference>
<dbReference type="eggNOG" id="ENOG502TF02">
    <property type="taxonomic scope" value="Eukaryota"/>
</dbReference>
<dbReference type="GeneTree" id="ENSGT00530000064429"/>
<dbReference type="HOGENOM" id="CLU_181906_3_0_1"/>
<dbReference type="InParanoid" id="Q32ZG2"/>
<dbReference type="OMA" id="NTCWRTK"/>
<dbReference type="OrthoDB" id="9534593at2759"/>
<dbReference type="PhylomeDB" id="Q32ZG2"/>
<dbReference type="Reactome" id="R-RNO-1461957">
    <property type="pathway name" value="Beta defensins"/>
</dbReference>
<dbReference type="Reactome" id="R-RNO-1461973">
    <property type="pathway name" value="Defensins"/>
</dbReference>
<dbReference type="PRO" id="PR:Q32ZG2"/>
<dbReference type="Proteomes" id="UP000002494">
    <property type="component" value="Chromosome 15"/>
</dbReference>
<dbReference type="GO" id="GO:0005576">
    <property type="term" value="C:extracellular region"/>
    <property type="evidence" value="ECO:0007669"/>
    <property type="project" value="UniProtKB-SubCell"/>
</dbReference>
<dbReference type="GO" id="GO:0042742">
    <property type="term" value="P:defense response to bacterium"/>
    <property type="evidence" value="ECO:0007669"/>
    <property type="project" value="UniProtKB-KW"/>
</dbReference>
<dbReference type="GO" id="GO:0045087">
    <property type="term" value="P:innate immune response"/>
    <property type="evidence" value="ECO:0007669"/>
    <property type="project" value="InterPro"/>
</dbReference>
<dbReference type="Gene3D" id="3.10.360.10">
    <property type="entry name" value="Antimicrobial Peptide, Beta-defensin 2, Chain A"/>
    <property type="match status" value="1"/>
</dbReference>
<dbReference type="InterPro" id="IPR050544">
    <property type="entry name" value="Beta-defensin"/>
</dbReference>
<dbReference type="InterPro" id="IPR025933">
    <property type="entry name" value="Beta_defensin_dom"/>
</dbReference>
<dbReference type="PANTHER" id="PTHR15001">
    <property type="entry name" value="BETA-DEFENSIN 123-RELATED"/>
    <property type="match status" value="1"/>
</dbReference>
<dbReference type="PANTHER" id="PTHR15001:SF10">
    <property type="entry name" value="BETA-DEFENSIN 135"/>
    <property type="match status" value="1"/>
</dbReference>
<dbReference type="Pfam" id="PF13841">
    <property type="entry name" value="Defensin_beta_2"/>
    <property type="match status" value="1"/>
</dbReference>
<evidence type="ECO:0000250" key="1"/>
<evidence type="ECO:0000255" key="2"/>
<evidence type="ECO:0000305" key="3"/>
<organism>
    <name type="scientific">Rattus norvegicus</name>
    <name type="common">Rat</name>
    <dbReference type="NCBI Taxonomy" id="10116"/>
    <lineage>
        <taxon>Eukaryota</taxon>
        <taxon>Metazoa</taxon>
        <taxon>Chordata</taxon>
        <taxon>Craniata</taxon>
        <taxon>Vertebrata</taxon>
        <taxon>Euteleostomi</taxon>
        <taxon>Mammalia</taxon>
        <taxon>Eutheria</taxon>
        <taxon>Euarchontoglires</taxon>
        <taxon>Glires</taxon>
        <taxon>Rodentia</taxon>
        <taxon>Myomorpha</taxon>
        <taxon>Muroidea</taxon>
        <taxon>Muridae</taxon>
        <taxon>Murinae</taxon>
        <taxon>Rattus</taxon>
    </lineage>
</organism>
<feature type="signal peptide" evidence="2">
    <location>
        <begin position="1"/>
        <end position="22"/>
    </location>
</feature>
<feature type="chain" id="PRO_0000352711" description="Beta-defensin 30">
    <location>
        <begin position="23"/>
        <end position="75"/>
    </location>
</feature>
<feature type="disulfide bond" evidence="1">
    <location>
        <begin position="35"/>
        <end position="62"/>
    </location>
</feature>
<feature type="disulfide bond" evidence="1">
    <location>
        <begin position="42"/>
        <end position="56"/>
    </location>
</feature>
<feature type="disulfide bond" evidence="1">
    <location>
        <begin position="46"/>
        <end position="63"/>
    </location>
</feature>
<comment type="function">
    <text evidence="1">Has antibacterial activity.</text>
</comment>
<comment type="subcellular location">
    <subcellularLocation>
        <location evidence="1">Secreted</location>
    </subcellularLocation>
</comment>
<comment type="similarity">
    <text evidence="3">Belongs to the beta-defensin family.</text>
</comment>
<keyword id="KW-0044">Antibiotic</keyword>
<keyword id="KW-0929">Antimicrobial</keyword>
<keyword id="KW-0211">Defensin</keyword>
<keyword id="KW-1015">Disulfide bond</keyword>
<keyword id="KW-1185">Reference proteome</keyword>
<keyword id="KW-0964">Secreted</keyword>
<keyword id="KW-0732">Signal</keyword>
<protein>
    <recommendedName>
        <fullName>Beta-defensin 30</fullName>
        <shortName>BD-30</shortName>
    </recommendedName>
    <alternativeName>
        <fullName>Defensin, beta 30</fullName>
    </alternativeName>
</protein>
<gene>
    <name type="primary">Defb30</name>
</gene>
<accession>Q32ZG2</accession>
<sequence>MGSLQLILVLFVLLSDVPPVRSGVNMYIRQIYDTCWKLKGHCRNVCGKKEIFHIFCGTQFLCCIERKEMPVLFVK</sequence>
<proteinExistence type="inferred from homology"/>
<reference key="1">
    <citation type="journal article" date="2005" name="Physiol. Genomics">
        <title>Cross-species analysis of the mammalian beta-defensin gene family: presence of syntenic gene clusters and preferential expression in the male reproductive tract.</title>
        <authorList>
            <person name="Patil A.A."/>
            <person name="Cai Y."/>
            <person name="Sang Y."/>
            <person name="Blecha F."/>
            <person name="Zhang G."/>
        </authorList>
    </citation>
    <scope>NUCLEOTIDE SEQUENCE [MRNA]</scope>
</reference>
<reference key="2">
    <citation type="journal article" date="2006" name="Reprod. Biol. Endocrinol.">
        <title>Identification, cloning and functional characterization of novel beta-defensins in the rat (Rattus norvegicus).</title>
        <authorList>
            <person name="Yenugu S."/>
            <person name="Chintalgattu V."/>
            <person name="Wingard C.J."/>
            <person name="Radhakrishnan Y."/>
            <person name="French F.S."/>
            <person name="Hall S.H."/>
        </authorList>
    </citation>
    <scope>NUCLEOTIDE SEQUENCE [MRNA]</scope>
    <source>
        <strain>Wistar</strain>
        <tissue>Epididymis</tissue>
    </source>
</reference>